<gene>
    <name type="primary">Timd2</name>
    <name type="synonym">Tim2</name>
</gene>
<sequence>MVQLQVFISGLLLLLPGAVASYTVVQGHSVTLPCIYSTTYRDEMVPTCWGRGECRSSYCTRSLIWTNGYKVTYQRSNRYQLKGNISEGNVSLTIENTVVSDSGPYCCIAEIPGAFYFVDYLLEVKAELPTSPPTRPTNTGRPTTTRPTNTGRPTTTRPTNTGRPTTTERPTTTGRPTTTERPTTTGRPTTISTRSTHVPTSTRVSTSTPPTPEQTQTHRSEATTYYPDQTTAEVTEAPSHTPTDWNNTATSSDDSWNSDTEAIPPQKLQRNPTKGFYVGMSFAALLLLLLASTVAITRYMVMRKNSGSLRFVAFPVSKIGASQNKVVEQARIEDEVYIIEDSPYFEEES</sequence>
<protein>
    <recommendedName>
        <fullName>T-cell immunoglobulin and mucin domain-containing protein 2</fullName>
        <shortName>TIMD-2</shortName>
    </recommendedName>
    <alternativeName>
        <fullName>T-cell immunoglobulin mucin receptor 2</fullName>
        <shortName>TIM-2</shortName>
    </alternativeName>
    <alternativeName>
        <fullName>T-cell membrane protein 2</fullName>
    </alternativeName>
</protein>
<keyword id="KW-1003">Cell membrane</keyword>
<keyword id="KW-1015">Disulfide bond</keyword>
<keyword id="KW-0325">Glycoprotein</keyword>
<keyword id="KW-0393">Immunoglobulin domain</keyword>
<keyword id="KW-0472">Membrane</keyword>
<keyword id="KW-0675">Receptor</keyword>
<keyword id="KW-1185">Reference proteome</keyword>
<keyword id="KW-0732">Signal</keyword>
<keyword id="KW-0812">Transmembrane</keyword>
<keyword id="KW-1133">Transmembrane helix</keyword>
<organism>
    <name type="scientific">Rattus norvegicus</name>
    <name type="common">Rat</name>
    <dbReference type="NCBI Taxonomy" id="10116"/>
    <lineage>
        <taxon>Eukaryota</taxon>
        <taxon>Metazoa</taxon>
        <taxon>Chordata</taxon>
        <taxon>Craniata</taxon>
        <taxon>Vertebrata</taxon>
        <taxon>Euteleostomi</taxon>
        <taxon>Mammalia</taxon>
        <taxon>Eutheria</taxon>
        <taxon>Euarchontoglires</taxon>
        <taxon>Glires</taxon>
        <taxon>Rodentia</taxon>
        <taxon>Myomorpha</taxon>
        <taxon>Muroidea</taxon>
        <taxon>Muridae</taxon>
        <taxon>Murinae</taxon>
        <taxon>Rattus</taxon>
    </lineage>
</organism>
<dbReference type="EMBL" id="BC089832">
    <property type="protein sequence ID" value="AAH89832.1"/>
    <property type="molecule type" value="mRNA"/>
</dbReference>
<dbReference type="RefSeq" id="NP_001013877.1">
    <property type="nucleotide sequence ID" value="NM_001013855.1"/>
</dbReference>
<dbReference type="RefSeq" id="XP_006246230.1">
    <property type="nucleotide sequence ID" value="XM_006246168.4"/>
</dbReference>
<dbReference type="RefSeq" id="XP_008765891.1">
    <property type="nucleotide sequence ID" value="XM_008767669.4"/>
</dbReference>
<dbReference type="SMR" id="Q5FVR0"/>
<dbReference type="FunCoup" id="Q5FVR0">
    <property type="interactions" value="386"/>
</dbReference>
<dbReference type="STRING" id="10116.ENSRNOP00000056223"/>
<dbReference type="GlyCosmos" id="Q5FVR0">
    <property type="glycosylation" value="2 sites, No reported glycans"/>
</dbReference>
<dbReference type="GlyGen" id="Q5FVR0">
    <property type="glycosylation" value="3 sites"/>
</dbReference>
<dbReference type="PhosphoSitePlus" id="Q5FVR0"/>
<dbReference type="PaxDb" id="10116-ENSRNOP00000056223"/>
<dbReference type="Ensembl" id="ENSRNOT00000059468.4">
    <property type="protein sequence ID" value="ENSRNOP00000056223.2"/>
    <property type="gene ID" value="ENSRNOG00000021345.6"/>
</dbReference>
<dbReference type="GeneID" id="287222"/>
<dbReference type="KEGG" id="rno:287222"/>
<dbReference type="UCSC" id="RGD:1359571">
    <property type="organism name" value="rat"/>
</dbReference>
<dbReference type="AGR" id="RGD:1359571"/>
<dbReference type="CTD" id="171284"/>
<dbReference type="RGD" id="1359571">
    <property type="gene designation" value="Timd2"/>
</dbReference>
<dbReference type="eggNOG" id="ENOG502S454">
    <property type="taxonomic scope" value="Eukaryota"/>
</dbReference>
<dbReference type="GeneTree" id="ENSGT00940000159345"/>
<dbReference type="HOGENOM" id="CLU_047504_2_1_1"/>
<dbReference type="InParanoid" id="Q5FVR0"/>
<dbReference type="OMA" id="EHSPQMV"/>
<dbReference type="OrthoDB" id="8447307at2759"/>
<dbReference type="PhylomeDB" id="Q5FVR0"/>
<dbReference type="TreeFam" id="TF336163"/>
<dbReference type="PRO" id="PR:Q5FVR0"/>
<dbReference type="Proteomes" id="UP000002494">
    <property type="component" value="Chromosome 10"/>
</dbReference>
<dbReference type="Bgee" id="ENSRNOG00000021345">
    <property type="expression patterns" value="Expressed in liver and 10 other cell types or tissues"/>
</dbReference>
<dbReference type="GO" id="GO:0009986">
    <property type="term" value="C:cell surface"/>
    <property type="evidence" value="ECO:0000266"/>
    <property type="project" value="RGD"/>
</dbReference>
<dbReference type="GO" id="GO:0005886">
    <property type="term" value="C:plasma membrane"/>
    <property type="evidence" value="ECO:0007669"/>
    <property type="project" value="UniProtKB-SubCell"/>
</dbReference>
<dbReference type="GO" id="GO:0070287">
    <property type="term" value="F:ferritin receptor activity"/>
    <property type="evidence" value="ECO:0000266"/>
    <property type="project" value="RGD"/>
</dbReference>
<dbReference type="GO" id="GO:0001786">
    <property type="term" value="F:phosphatidylserine binding"/>
    <property type="evidence" value="ECO:0000318"/>
    <property type="project" value="GO_Central"/>
</dbReference>
<dbReference type="GO" id="GO:0001618">
    <property type="term" value="F:virus receptor activity"/>
    <property type="evidence" value="ECO:0000318"/>
    <property type="project" value="GO_Central"/>
</dbReference>
<dbReference type="GO" id="GO:0006826">
    <property type="term" value="P:iron ion transport"/>
    <property type="evidence" value="ECO:0000266"/>
    <property type="project" value="RGD"/>
</dbReference>
<dbReference type="GO" id="GO:0006911">
    <property type="term" value="P:phagocytosis, engulfment"/>
    <property type="evidence" value="ECO:0000318"/>
    <property type="project" value="GO_Central"/>
</dbReference>
<dbReference type="GO" id="GO:0033005">
    <property type="term" value="P:positive regulation of mast cell activation"/>
    <property type="evidence" value="ECO:0000318"/>
    <property type="project" value="GO_Central"/>
</dbReference>
<dbReference type="CDD" id="cd20982">
    <property type="entry name" value="IgV_TIM-3_like"/>
    <property type="match status" value="1"/>
</dbReference>
<dbReference type="FunFam" id="2.60.40.10:FF:000774">
    <property type="entry name" value="Hepatitis A virus cellular receptor 1"/>
    <property type="match status" value="1"/>
</dbReference>
<dbReference type="Gene3D" id="2.60.40.10">
    <property type="entry name" value="Immunoglobulins"/>
    <property type="match status" value="1"/>
</dbReference>
<dbReference type="InterPro" id="IPR007110">
    <property type="entry name" value="Ig-like_dom"/>
</dbReference>
<dbReference type="InterPro" id="IPR036179">
    <property type="entry name" value="Ig-like_dom_sf"/>
</dbReference>
<dbReference type="InterPro" id="IPR013783">
    <property type="entry name" value="Ig-like_fold"/>
</dbReference>
<dbReference type="InterPro" id="IPR003599">
    <property type="entry name" value="Ig_sub"/>
</dbReference>
<dbReference type="InterPro" id="IPR013106">
    <property type="entry name" value="Ig_V-set"/>
</dbReference>
<dbReference type="InterPro" id="IPR052331">
    <property type="entry name" value="TIM_domain-containing_protein"/>
</dbReference>
<dbReference type="PANTHER" id="PTHR47009:SF1">
    <property type="entry name" value="HEPATITIS A VIRUS CELLULAR RECEPTOR 1"/>
    <property type="match status" value="1"/>
</dbReference>
<dbReference type="PANTHER" id="PTHR47009">
    <property type="entry name" value="HEPATITIS A VIRUS CELLULAR RECEPTOR 1 HOMOLOG"/>
    <property type="match status" value="1"/>
</dbReference>
<dbReference type="Pfam" id="PF07686">
    <property type="entry name" value="V-set"/>
    <property type="match status" value="1"/>
</dbReference>
<dbReference type="SMART" id="SM00409">
    <property type="entry name" value="IG"/>
    <property type="match status" value="1"/>
</dbReference>
<dbReference type="SUPFAM" id="SSF48726">
    <property type="entry name" value="Immunoglobulin"/>
    <property type="match status" value="1"/>
</dbReference>
<dbReference type="PROSITE" id="PS50835">
    <property type="entry name" value="IG_LIKE"/>
    <property type="match status" value="1"/>
</dbReference>
<reference key="1">
    <citation type="journal article" date="2004" name="Genome Res.">
        <title>The status, quality, and expansion of the NIH full-length cDNA project: the Mammalian Gene Collection (MGC).</title>
        <authorList>
            <consortium name="The MGC Project Team"/>
        </authorList>
    </citation>
    <scope>NUCLEOTIDE SEQUENCE [LARGE SCALE MRNA]</scope>
    <source>
        <tissue>Liver</tissue>
    </source>
</reference>
<feature type="signal peptide" evidence="2">
    <location>
        <begin position="1"/>
        <end position="20"/>
    </location>
</feature>
<feature type="chain" id="PRO_0000042100" description="T-cell immunoglobulin and mucin domain-containing protein 2">
    <location>
        <begin position="21"/>
        <end position="349"/>
    </location>
</feature>
<feature type="topological domain" description="Extracellular" evidence="2">
    <location>
        <begin position="21"/>
        <end position="275"/>
    </location>
</feature>
<feature type="transmembrane region" description="Helical" evidence="2">
    <location>
        <begin position="276"/>
        <end position="296"/>
    </location>
</feature>
<feature type="topological domain" description="Cytoplasmic" evidence="2">
    <location>
        <begin position="297"/>
        <end position="349"/>
    </location>
</feature>
<feature type="domain" description="Ig-like V-type">
    <location>
        <begin position="22"/>
        <end position="123"/>
    </location>
</feature>
<feature type="region of interest" description="Disordered" evidence="4">
    <location>
        <begin position="128"/>
        <end position="271"/>
    </location>
</feature>
<feature type="compositionally biased region" description="Low complexity" evidence="4">
    <location>
        <begin position="136"/>
        <end position="215"/>
    </location>
</feature>
<feature type="compositionally biased region" description="Polar residues" evidence="4">
    <location>
        <begin position="222"/>
        <end position="260"/>
    </location>
</feature>
<feature type="glycosylation site" description="N-linked (GlcNAc...) asparagine" evidence="2">
    <location>
        <position position="84"/>
    </location>
</feature>
<feature type="glycosylation site" description="N-linked (GlcNAc...) asparagine" evidence="2">
    <location>
        <position position="89"/>
    </location>
</feature>
<feature type="disulfide bond" evidence="3">
    <location>
        <begin position="34"/>
        <end position="107"/>
    </location>
</feature>
<feature type="disulfide bond" evidence="3">
    <location>
        <begin position="48"/>
        <end position="59"/>
    </location>
</feature>
<feature type="disulfide bond" evidence="3">
    <location>
        <begin position="54"/>
        <end position="106"/>
    </location>
</feature>
<accession>Q5FVR0</accession>
<proteinExistence type="evidence at transcript level"/>
<comment type="function">
    <text evidence="1">Probable receptor for SEMA4A involved in the regulation of T-cell function. The interaction with SEMA4A enhances T-cell activation (By similarity).</text>
</comment>
<comment type="subunit">
    <text evidence="1">Homodimer.</text>
</comment>
<comment type="subcellular location">
    <subcellularLocation>
        <location evidence="1">Cell membrane</location>
        <topology evidence="1">Single-pass type I membrane protein</topology>
    </subcellularLocation>
</comment>
<comment type="miscellaneous">
    <text>Human appears to lack the Timd2 gene.</text>
</comment>
<comment type="similarity">
    <text evidence="5">Belongs to the immunoglobulin superfamily. TIM family.</text>
</comment>
<name>TIMD2_RAT</name>
<evidence type="ECO:0000250" key="1"/>
<evidence type="ECO:0000255" key="2"/>
<evidence type="ECO:0000255" key="3">
    <source>
        <dbReference type="PROSITE-ProRule" id="PRU00114"/>
    </source>
</evidence>
<evidence type="ECO:0000256" key="4">
    <source>
        <dbReference type="SAM" id="MobiDB-lite"/>
    </source>
</evidence>
<evidence type="ECO:0000305" key="5"/>